<feature type="chain" id="PRO_1000010820" description="Elongation factor P">
    <location>
        <begin position="1"/>
        <end position="188"/>
    </location>
</feature>
<proteinExistence type="inferred from homology"/>
<keyword id="KW-0963">Cytoplasm</keyword>
<keyword id="KW-0251">Elongation factor</keyword>
<keyword id="KW-0648">Protein biosynthesis</keyword>
<keyword id="KW-1185">Reference proteome</keyword>
<name>EFP_STUS1</name>
<protein>
    <recommendedName>
        <fullName evidence="1">Elongation factor P</fullName>
        <shortName evidence="1">EF-P</shortName>
    </recommendedName>
</protein>
<organism>
    <name type="scientific">Stutzerimonas stutzeri (strain A1501)</name>
    <name type="common">Pseudomonas stutzeri</name>
    <dbReference type="NCBI Taxonomy" id="379731"/>
    <lineage>
        <taxon>Bacteria</taxon>
        <taxon>Pseudomonadati</taxon>
        <taxon>Pseudomonadota</taxon>
        <taxon>Gammaproteobacteria</taxon>
        <taxon>Pseudomonadales</taxon>
        <taxon>Pseudomonadaceae</taxon>
        <taxon>Stutzerimonas</taxon>
    </lineage>
</organism>
<comment type="function">
    <text evidence="1">Involved in peptide bond synthesis. Stimulates efficient translation and peptide-bond synthesis on native or reconstituted 70S ribosomes in vitro. Probably functions indirectly by altering the affinity of the ribosome for aminoacyl-tRNA, thus increasing their reactivity as acceptors for peptidyl transferase.</text>
</comment>
<comment type="pathway">
    <text evidence="1">Protein biosynthesis; polypeptide chain elongation.</text>
</comment>
<comment type="subcellular location">
    <subcellularLocation>
        <location evidence="1">Cytoplasm</location>
    </subcellularLocation>
</comment>
<comment type="similarity">
    <text evidence="1">Belongs to the elongation factor P family.</text>
</comment>
<reference key="1">
    <citation type="journal article" date="2008" name="Proc. Natl. Acad. Sci. U.S.A.">
        <title>Nitrogen fixation island and rhizosphere competence traits in the genome of root-associated Pseudomonas stutzeri A1501.</title>
        <authorList>
            <person name="Yan Y."/>
            <person name="Yang J."/>
            <person name="Dou Y."/>
            <person name="Chen M."/>
            <person name="Ping S."/>
            <person name="Peng J."/>
            <person name="Lu W."/>
            <person name="Zhang W."/>
            <person name="Yao Z."/>
            <person name="Li H."/>
            <person name="Liu W."/>
            <person name="He S."/>
            <person name="Geng L."/>
            <person name="Zhang X."/>
            <person name="Yang F."/>
            <person name="Yu H."/>
            <person name="Zhan Y."/>
            <person name="Li D."/>
            <person name="Lin Z."/>
            <person name="Wang Y."/>
            <person name="Elmerich C."/>
            <person name="Lin M."/>
            <person name="Jin Q."/>
        </authorList>
    </citation>
    <scope>NUCLEOTIDE SEQUENCE [LARGE SCALE GENOMIC DNA]</scope>
    <source>
        <strain>A1501</strain>
    </source>
</reference>
<accession>A4VMG3</accession>
<gene>
    <name evidence="1" type="primary">efp</name>
    <name type="ordered locus">PST_2512</name>
</gene>
<evidence type="ECO:0000255" key="1">
    <source>
        <dbReference type="HAMAP-Rule" id="MF_00141"/>
    </source>
</evidence>
<sequence length="188" mass="21121">MKTAQEFRAGQVAIINGAPWVIQKAEFNKSGRNSAVVKMKLKNLLNGSATETVYKADDKLEPVILERKEVTYSYFADPLYVFMDNEFNQYEIEKDDLEGVMTFIEDGMTDVCEAVFYNDKVISVELPTTIVREIAYTEPSVRGDTSGKVMKTARLKNGAELQVSAFCEIGDSIEIDTRTGEYKSRVKA</sequence>
<dbReference type="EMBL" id="CP000304">
    <property type="protein sequence ID" value="ABP80164.1"/>
    <property type="molecule type" value="Genomic_DNA"/>
</dbReference>
<dbReference type="RefSeq" id="WP_011913626.1">
    <property type="nucleotide sequence ID" value="NC_009434.1"/>
</dbReference>
<dbReference type="SMR" id="A4VMG3"/>
<dbReference type="GeneID" id="75215013"/>
<dbReference type="KEGG" id="psa:PST_2512"/>
<dbReference type="eggNOG" id="COG0231">
    <property type="taxonomic scope" value="Bacteria"/>
</dbReference>
<dbReference type="HOGENOM" id="CLU_074944_2_1_6"/>
<dbReference type="UniPathway" id="UPA00345"/>
<dbReference type="Proteomes" id="UP000000233">
    <property type="component" value="Chromosome"/>
</dbReference>
<dbReference type="GO" id="GO:0005737">
    <property type="term" value="C:cytoplasm"/>
    <property type="evidence" value="ECO:0007669"/>
    <property type="project" value="UniProtKB-SubCell"/>
</dbReference>
<dbReference type="GO" id="GO:0003746">
    <property type="term" value="F:translation elongation factor activity"/>
    <property type="evidence" value="ECO:0007669"/>
    <property type="project" value="UniProtKB-UniRule"/>
</dbReference>
<dbReference type="GO" id="GO:0043043">
    <property type="term" value="P:peptide biosynthetic process"/>
    <property type="evidence" value="ECO:0007669"/>
    <property type="project" value="InterPro"/>
</dbReference>
<dbReference type="CDD" id="cd04470">
    <property type="entry name" value="S1_EF-P_repeat_1"/>
    <property type="match status" value="1"/>
</dbReference>
<dbReference type="CDD" id="cd05794">
    <property type="entry name" value="S1_EF-P_repeat_2"/>
    <property type="match status" value="1"/>
</dbReference>
<dbReference type="FunFam" id="2.30.30.30:FF:000003">
    <property type="entry name" value="Elongation factor P"/>
    <property type="match status" value="1"/>
</dbReference>
<dbReference type="FunFam" id="2.40.50.140:FF:000004">
    <property type="entry name" value="Elongation factor P"/>
    <property type="match status" value="1"/>
</dbReference>
<dbReference type="FunFam" id="2.40.50.140:FF:000009">
    <property type="entry name" value="Elongation factor P"/>
    <property type="match status" value="1"/>
</dbReference>
<dbReference type="Gene3D" id="2.30.30.30">
    <property type="match status" value="1"/>
</dbReference>
<dbReference type="Gene3D" id="2.40.50.140">
    <property type="entry name" value="Nucleic acid-binding proteins"/>
    <property type="match status" value="2"/>
</dbReference>
<dbReference type="HAMAP" id="MF_00141">
    <property type="entry name" value="EF_P"/>
    <property type="match status" value="1"/>
</dbReference>
<dbReference type="InterPro" id="IPR015365">
    <property type="entry name" value="Elong-fact-P_C"/>
</dbReference>
<dbReference type="InterPro" id="IPR012340">
    <property type="entry name" value="NA-bd_OB-fold"/>
</dbReference>
<dbReference type="InterPro" id="IPR014722">
    <property type="entry name" value="Rib_uL2_dom2"/>
</dbReference>
<dbReference type="InterPro" id="IPR020599">
    <property type="entry name" value="Transl_elong_fac_P/YeiP"/>
</dbReference>
<dbReference type="InterPro" id="IPR013185">
    <property type="entry name" value="Transl_elong_KOW-like"/>
</dbReference>
<dbReference type="InterPro" id="IPR001059">
    <property type="entry name" value="Transl_elong_P/YeiP_cen"/>
</dbReference>
<dbReference type="InterPro" id="IPR011768">
    <property type="entry name" value="Transl_elongation_fac_P"/>
</dbReference>
<dbReference type="InterPro" id="IPR008991">
    <property type="entry name" value="Translation_prot_SH3-like_sf"/>
</dbReference>
<dbReference type="NCBIfam" id="TIGR00038">
    <property type="entry name" value="efp"/>
    <property type="match status" value="1"/>
</dbReference>
<dbReference type="NCBIfam" id="NF001810">
    <property type="entry name" value="PRK00529.1"/>
    <property type="match status" value="1"/>
</dbReference>
<dbReference type="PANTHER" id="PTHR30053">
    <property type="entry name" value="ELONGATION FACTOR P"/>
    <property type="match status" value="1"/>
</dbReference>
<dbReference type="PANTHER" id="PTHR30053:SF12">
    <property type="entry name" value="ELONGATION FACTOR P (EF-P) FAMILY PROTEIN"/>
    <property type="match status" value="1"/>
</dbReference>
<dbReference type="Pfam" id="PF01132">
    <property type="entry name" value="EFP"/>
    <property type="match status" value="1"/>
</dbReference>
<dbReference type="Pfam" id="PF08207">
    <property type="entry name" value="EFP_N"/>
    <property type="match status" value="1"/>
</dbReference>
<dbReference type="Pfam" id="PF09285">
    <property type="entry name" value="Elong-fact-P_C"/>
    <property type="match status" value="1"/>
</dbReference>
<dbReference type="PIRSF" id="PIRSF005901">
    <property type="entry name" value="EF-P"/>
    <property type="match status" value="1"/>
</dbReference>
<dbReference type="SMART" id="SM01185">
    <property type="entry name" value="EFP"/>
    <property type="match status" value="1"/>
</dbReference>
<dbReference type="SMART" id="SM00841">
    <property type="entry name" value="Elong-fact-P_C"/>
    <property type="match status" value="1"/>
</dbReference>
<dbReference type="SUPFAM" id="SSF50249">
    <property type="entry name" value="Nucleic acid-binding proteins"/>
    <property type="match status" value="2"/>
</dbReference>
<dbReference type="SUPFAM" id="SSF50104">
    <property type="entry name" value="Translation proteins SH3-like domain"/>
    <property type="match status" value="1"/>
</dbReference>